<comment type="function">
    <text evidence="1">Polycomb group (PcG) protein. Catalytic subunit of some PcG multiprotein complex, which methylates 'Lys-27' of histone H3, leading to transcriptional repression of the affected target genes. PcG proteins are not required to initiate repression, but to maintain it during later stages of development (By similarity).</text>
</comment>
<comment type="catalytic activity">
    <reaction evidence="3">
        <text>L-lysyl(27)-[histone H3] + 3 S-adenosyl-L-methionine = N(6),N(6),N(6)-trimethyl-L-lysyl(27)-[histone H3] + 3 S-adenosyl-L-homocysteine + 3 H(+)</text>
        <dbReference type="Rhea" id="RHEA:60292"/>
        <dbReference type="Rhea" id="RHEA-COMP:15535"/>
        <dbReference type="Rhea" id="RHEA-COMP:15548"/>
        <dbReference type="ChEBI" id="CHEBI:15378"/>
        <dbReference type="ChEBI" id="CHEBI:29969"/>
        <dbReference type="ChEBI" id="CHEBI:57856"/>
        <dbReference type="ChEBI" id="CHEBI:59789"/>
        <dbReference type="ChEBI" id="CHEBI:61961"/>
        <dbReference type="EC" id="2.1.1.356"/>
    </reaction>
</comment>
<comment type="subcellular location">
    <subcellularLocation>
        <location evidence="7">Nucleus</location>
    </subcellularLocation>
</comment>
<comment type="alternative products">
    <event type="alternative splicing"/>
    <isoform>
        <id>Q8S4P5-1</id>
        <name>1</name>
        <sequence type="displayed"/>
    </isoform>
    <isoform>
        <id>Q8S4P5-2</id>
        <name>2</name>
        <name>as1</name>
        <sequence type="described" ref="VSP_007783"/>
    </isoform>
    <isoform>
        <id>Q8S4P5-3</id>
        <name>3</name>
        <name>as2</name>
        <sequence type="described" ref="VSP_007784"/>
    </isoform>
</comment>
<comment type="similarity">
    <text evidence="3">Belongs to the class V-like SAM-binding methyltransferase superfamily. Histone-lysine methyltransferase family. EZ subfamily.</text>
</comment>
<keyword id="KW-0025">Alternative splicing</keyword>
<keyword id="KW-0489">Methyltransferase</keyword>
<keyword id="KW-0539">Nucleus</keyword>
<keyword id="KW-1185">Reference proteome</keyword>
<keyword id="KW-0678">Repressor</keyword>
<keyword id="KW-0949">S-adenosyl-L-methionine</keyword>
<keyword id="KW-0804">Transcription</keyword>
<keyword id="KW-0805">Transcription regulation</keyword>
<keyword id="KW-0808">Transferase</keyword>
<accession>Q8S4P5</accession>
<dbReference type="EC" id="2.1.1.356"/>
<dbReference type="EMBL" id="AF443597">
    <property type="protein sequence ID" value="AAM13421.1"/>
    <property type="molecule type" value="mRNA"/>
</dbReference>
<dbReference type="RefSeq" id="NP_001105650.1">
    <molecule id="Q8S4P5-1"/>
    <property type="nucleotide sequence ID" value="NM_001112180.1"/>
</dbReference>
<dbReference type="SMR" id="Q8S4P5"/>
<dbReference type="FunCoup" id="Q8S4P5">
    <property type="interactions" value="1135"/>
</dbReference>
<dbReference type="STRING" id="4577.Q8S4P5"/>
<dbReference type="PaxDb" id="4577-GRMZM5G875502_P02"/>
<dbReference type="EnsemblPlants" id="Zm00001eb396070_T002">
    <molecule id="Q8S4P5-1"/>
    <property type="protein sequence ID" value="Zm00001eb396070_P002"/>
    <property type="gene ID" value="Zm00001eb396070"/>
</dbReference>
<dbReference type="GeneID" id="542659"/>
<dbReference type="Gramene" id="Zm00001eb396070_T002">
    <molecule id="Q8S4P5-1"/>
    <property type="protein sequence ID" value="Zm00001eb396070_P002"/>
    <property type="gene ID" value="Zm00001eb396070"/>
</dbReference>
<dbReference type="KEGG" id="zma:542659"/>
<dbReference type="MaizeGDB" id="754843"/>
<dbReference type="eggNOG" id="KOG1079">
    <property type="taxonomic scope" value="Eukaryota"/>
</dbReference>
<dbReference type="InParanoid" id="Q8S4P5"/>
<dbReference type="OrthoDB" id="690292at2759"/>
<dbReference type="Proteomes" id="UP000007305">
    <property type="component" value="Chromosome 9"/>
</dbReference>
<dbReference type="ExpressionAtlas" id="Q8S4P5">
    <property type="expression patterns" value="baseline and differential"/>
</dbReference>
<dbReference type="GO" id="GO:0005634">
    <property type="term" value="C:nucleus"/>
    <property type="evidence" value="ECO:0000318"/>
    <property type="project" value="GO_Central"/>
</dbReference>
<dbReference type="GO" id="GO:0031519">
    <property type="term" value="C:PcG protein complex"/>
    <property type="evidence" value="ECO:0007669"/>
    <property type="project" value="InterPro"/>
</dbReference>
<dbReference type="GO" id="GO:0003682">
    <property type="term" value="F:chromatin binding"/>
    <property type="evidence" value="ECO:0000318"/>
    <property type="project" value="GO_Central"/>
</dbReference>
<dbReference type="GO" id="GO:0046976">
    <property type="term" value="F:histone H3K27 methyltransferase activity"/>
    <property type="evidence" value="ECO:0000318"/>
    <property type="project" value="GO_Central"/>
</dbReference>
<dbReference type="GO" id="GO:0140951">
    <property type="term" value="F:histone H3K27 trimethyltransferase activity"/>
    <property type="evidence" value="ECO:0007669"/>
    <property type="project" value="UniProtKB-EC"/>
</dbReference>
<dbReference type="GO" id="GO:0031507">
    <property type="term" value="P:heterochromatin formation"/>
    <property type="evidence" value="ECO:0000318"/>
    <property type="project" value="GO_Central"/>
</dbReference>
<dbReference type="GO" id="GO:0032259">
    <property type="term" value="P:methylation"/>
    <property type="evidence" value="ECO:0007669"/>
    <property type="project" value="UniProtKB-KW"/>
</dbReference>
<dbReference type="CDD" id="cd00167">
    <property type="entry name" value="SANT"/>
    <property type="match status" value="1"/>
</dbReference>
<dbReference type="CDD" id="cd10519">
    <property type="entry name" value="SET_EZH"/>
    <property type="match status" value="1"/>
</dbReference>
<dbReference type="FunFam" id="2.170.270.10:FF:000001">
    <property type="entry name" value="Putative histone-lysine N-methyltransferase EZH2"/>
    <property type="match status" value="1"/>
</dbReference>
<dbReference type="Gene3D" id="2.170.270.10">
    <property type="entry name" value="SET domain"/>
    <property type="match status" value="1"/>
</dbReference>
<dbReference type="InterPro" id="IPR026489">
    <property type="entry name" value="CXC_dom"/>
</dbReference>
<dbReference type="InterPro" id="IPR045318">
    <property type="entry name" value="EZH1/2-like"/>
</dbReference>
<dbReference type="InterPro" id="IPR025778">
    <property type="entry name" value="Hist-Lys_N-MeTrfase_plant"/>
</dbReference>
<dbReference type="InterPro" id="IPR041355">
    <property type="entry name" value="Pre-SET_CXC"/>
</dbReference>
<dbReference type="InterPro" id="IPR001005">
    <property type="entry name" value="SANT/Myb"/>
</dbReference>
<dbReference type="InterPro" id="IPR001214">
    <property type="entry name" value="SET_dom"/>
</dbReference>
<dbReference type="InterPro" id="IPR046341">
    <property type="entry name" value="SET_dom_sf"/>
</dbReference>
<dbReference type="InterPro" id="IPR033467">
    <property type="entry name" value="Tesmin/TSO1-like_CXC"/>
</dbReference>
<dbReference type="PANTHER" id="PTHR45747">
    <property type="entry name" value="HISTONE-LYSINE N-METHYLTRANSFERASE E(Z)"/>
    <property type="match status" value="1"/>
</dbReference>
<dbReference type="PANTHER" id="PTHR45747:SF14">
    <property type="entry name" value="HISTONE-LYSINE N-METHYLTRANSFERASE EZA1"/>
    <property type="match status" value="1"/>
</dbReference>
<dbReference type="Pfam" id="PF18264">
    <property type="entry name" value="preSET_CXC"/>
    <property type="match status" value="1"/>
</dbReference>
<dbReference type="Pfam" id="PF00856">
    <property type="entry name" value="SET"/>
    <property type="match status" value="1"/>
</dbReference>
<dbReference type="SMART" id="SM01114">
    <property type="entry name" value="CXC"/>
    <property type="match status" value="1"/>
</dbReference>
<dbReference type="SMART" id="SM00317">
    <property type="entry name" value="SET"/>
    <property type="match status" value="1"/>
</dbReference>
<dbReference type="SUPFAM" id="SSF82199">
    <property type="entry name" value="SET domain"/>
    <property type="match status" value="1"/>
</dbReference>
<dbReference type="PROSITE" id="PS51633">
    <property type="entry name" value="CXC"/>
    <property type="match status" value="1"/>
</dbReference>
<dbReference type="PROSITE" id="PS51576">
    <property type="entry name" value="SAM_MT43_EZ"/>
    <property type="match status" value="1"/>
</dbReference>
<dbReference type="PROSITE" id="PS50280">
    <property type="entry name" value="SET"/>
    <property type="match status" value="1"/>
</dbReference>
<gene>
    <name type="primary">EZ2</name>
    <name type="synonym">MEZ2</name>
</gene>
<reference key="1">
    <citation type="journal article" date="2002" name="Plant Physiol.">
        <title>Sequence relationships, conserved domains, and expression patterns for maize homologs of the Polycomb group genes E(z), esc, and E(Pc).</title>
        <authorList>
            <person name="Springer N.M."/>
            <person name="Danilevskaya O.N."/>
            <person name="Hermon P."/>
            <person name="Helentjaris T.G."/>
            <person name="Phillips R.L."/>
            <person name="Kaeppler H.F."/>
            <person name="Kaeppler S.M."/>
        </authorList>
    </citation>
    <scope>NUCLEOTIDE SEQUENCE [MRNA] (ISOFORMS 1; 2 AND 3)</scope>
    <scope>TISSUE SPECIFICITY</scope>
    <scope>ALTERNATIVE SPLICING</scope>
    <source>
        <tissue>Seed</tissue>
    </source>
</reference>
<organism>
    <name type="scientific">Zea mays</name>
    <name type="common">Maize</name>
    <dbReference type="NCBI Taxonomy" id="4577"/>
    <lineage>
        <taxon>Eukaryota</taxon>
        <taxon>Viridiplantae</taxon>
        <taxon>Streptophyta</taxon>
        <taxon>Embryophyta</taxon>
        <taxon>Tracheophyta</taxon>
        <taxon>Spermatophyta</taxon>
        <taxon>Magnoliopsida</taxon>
        <taxon>Liliopsida</taxon>
        <taxon>Poales</taxon>
        <taxon>Poaceae</taxon>
        <taxon>PACMAD clade</taxon>
        <taxon>Panicoideae</taxon>
        <taxon>Andropogonodae</taxon>
        <taxon>Andropogoneae</taxon>
        <taxon>Tripsacinae</taxon>
        <taxon>Zea</taxon>
    </lineage>
</organism>
<proteinExistence type="evidence at transcript level"/>
<sequence>MASSSKASDSSQRSKRSDQGMGKDAAAASVVPIHANLTQLIRQVQSGRLAYIKEKLEVNRKTLQRHSCSLFDVAAAAEVASRGTDGGNALSQRAAERQCGSDLANGIGERDVVSVQEENLATGTLALSSSGATAQRTIVRFVKLPLVEKIPPYTTWIFLDKNQRMADDQSVVGRRRIYYDTVGNEALICSDSDEEIPEPEEEKHFFTKGEDHLIWRATQDHGLNQEVVNVLCQFIGATPSEIEERSEVLFEKNEKHSGSSDKIESRLSLDKTMDAVLDSFDNLFCRRCLVFDCRLHGCSQNLVFPCEKQPYSFDPDENKKPCGHLCYLRFPQWREGFKEMHDDGLAGGATYTMESGTASQRVDVNVMYESEDSNRQKGNIRSMTLVGTSGSKIISSVSAEESTTTPSADISETENVSSDLPPSSLRKHKISKHGPRYREHSPGKRQKVFTSDISFEGNIMNKLSIPEIRDTRLESRESGGDKLRILDESTKKTSRKDMCGESPATTMENVGRQSNKVSSTKNFLESTLSCWSALERDLYLKGIEIFGKNSCLIARNLLSGLKTCIEVANYMYNNGAAMAKRPLLNKSISGDFAENEQDYMEQDMAARTRIYRRRGRNRKLKYTWKSAGHPTVRKRTDDGKQCYTQYSPCACQQMCGKDCPCADKGTCCEKYCGCSKSCKNKFRGCHCAKSQCRSRQCPCFAASRECDPDVCRNCWVSCGDGSLGEPLARGDGYQCGNMKLLLKQQQRILLGRSDVAGWGAFIKNPVNKNDYLGEYTGELISHKEADKRGKIYDRANSSFLFDLNDQYVLDAYRKGDKLKFANHSSNPNCYAKVMLVAGDHRVGIYAKEHIEASEELFYDYRYGPDQAPAWARRPEGSKKDEASVSHRRAHKVAR</sequence>
<protein>
    <recommendedName>
        <fullName>Histone-lysine N-methyltransferase EZ2</fullName>
        <ecNumber>2.1.1.356</ecNumber>
    </recommendedName>
    <alternativeName>
        <fullName>Enhancer of zeste protein 2</fullName>
    </alternativeName>
</protein>
<feature type="chain" id="PRO_0000213999" description="Histone-lysine N-methyltransferase EZ2">
    <location>
        <begin position="1"/>
        <end position="894"/>
    </location>
</feature>
<feature type="domain" description="SANT">
    <location>
        <begin position="527"/>
        <end position="577"/>
    </location>
</feature>
<feature type="domain" description="CXC" evidence="4">
    <location>
        <begin position="627"/>
        <end position="731"/>
    </location>
</feature>
<feature type="domain" description="SET" evidence="2">
    <location>
        <begin position="746"/>
        <end position="861"/>
    </location>
</feature>
<feature type="region of interest" description="Disordered" evidence="5">
    <location>
        <begin position="1"/>
        <end position="25"/>
    </location>
</feature>
<feature type="region of interest" description="Disordered" evidence="5">
    <location>
        <begin position="395"/>
        <end position="447"/>
    </location>
</feature>
<feature type="region of interest" description="Disordered" evidence="5">
    <location>
        <begin position="491"/>
        <end position="513"/>
    </location>
</feature>
<feature type="region of interest" description="Disordered" evidence="5">
    <location>
        <begin position="867"/>
        <end position="894"/>
    </location>
</feature>
<feature type="compositionally biased region" description="Low complexity" evidence="5">
    <location>
        <begin position="1"/>
        <end position="11"/>
    </location>
</feature>
<feature type="compositionally biased region" description="Polar residues" evidence="5">
    <location>
        <begin position="395"/>
        <end position="421"/>
    </location>
</feature>
<feature type="compositionally biased region" description="Basic residues" evidence="5">
    <location>
        <begin position="425"/>
        <end position="435"/>
    </location>
</feature>
<feature type="compositionally biased region" description="Polar residues" evidence="5">
    <location>
        <begin position="503"/>
        <end position="513"/>
    </location>
</feature>
<feature type="compositionally biased region" description="Basic and acidic residues" evidence="5">
    <location>
        <begin position="872"/>
        <end position="884"/>
    </location>
</feature>
<feature type="compositionally biased region" description="Basic residues" evidence="5">
    <location>
        <begin position="885"/>
        <end position="894"/>
    </location>
</feature>
<feature type="splice variant" id="VSP_007783" description="In isoform 2." evidence="6">
    <location>
        <begin position="342"/>
        <end position="894"/>
    </location>
</feature>
<feature type="splice variant" id="VSP_007784" description="In isoform 3." evidence="6">
    <location>
        <begin position="625"/>
        <end position="894"/>
    </location>
</feature>
<evidence type="ECO:0000250" key="1"/>
<evidence type="ECO:0000255" key="2">
    <source>
        <dbReference type="PROSITE-ProRule" id="PRU00190"/>
    </source>
</evidence>
<evidence type="ECO:0000255" key="3">
    <source>
        <dbReference type="PROSITE-ProRule" id="PRU00909"/>
    </source>
</evidence>
<evidence type="ECO:0000255" key="4">
    <source>
        <dbReference type="PROSITE-ProRule" id="PRU00970"/>
    </source>
</evidence>
<evidence type="ECO:0000256" key="5">
    <source>
        <dbReference type="SAM" id="MobiDB-lite"/>
    </source>
</evidence>
<evidence type="ECO:0000303" key="6">
    <source>
    </source>
</evidence>
<evidence type="ECO:0000305" key="7"/>
<name>EZ2_MAIZE</name>